<organism>
    <name type="scientific">Erwinia tasmaniensis (strain DSM 17950 / CFBP 7177 / CIP 109463 / NCPPB 4357 / Et1/99)</name>
    <dbReference type="NCBI Taxonomy" id="465817"/>
    <lineage>
        <taxon>Bacteria</taxon>
        <taxon>Pseudomonadati</taxon>
        <taxon>Pseudomonadota</taxon>
        <taxon>Gammaproteobacteria</taxon>
        <taxon>Enterobacterales</taxon>
        <taxon>Erwiniaceae</taxon>
        <taxon>Erwinia</taxon>
    </lineage>
</organism>
<comment type="function">
    <text evidence="1">Involved in DNA repair and RecF pathway recombination.</text>
</comment>
<comment type="similarity">
    <text evidence="1">Belongs to the RecO family.</text>
</comment>
<reference key="1">
    <citation type="journal article" date="2008" name="Environ. Microbiol.">
        <title>The genome of Erwinia tasmaniensis strain Et1/99, a non-pathogenic bacterium in the genus Erwinia.</title>
        <authorList>
            <person name="Kube M."/>
            <person name="Migdoll A.M."/>
            <person name="Mueller I."/>
            <person name="Kuhl H."/>
            <person name="Beck A."/>
            <person name="Reinhardt R."/>
            <person name="Geider K."/>
        </authorList>
    </citation>
    <scope>NUCLEOTIDE SEQUENCE [LARGE SCALE GENOMIC DNA]</scope>
    <source>
        <strain>DSM 17950 / CFBP 7177 / CIP 109463 / NCPPB 4357 / Et1/99</strain>
    </source>
</reference>
<gene>
    <name evidence="1" type="primary">recO</name>
    <name type="ordered locus">ETA_09940</name>
</gene>
<evidence type="ECO:0000255" key="1">
    <source>
        <dbReference type="HAMAP-Rule" id="MF_00201"/>
    </source>
</evidence>
<protein>
    <recommendedName>
        <fullName evidence="1">DNA repair protein RecO</fullName>
    </recommendedName>
    <alternativeName>
        <fullName evidence="1">Recombination protein O</fullName>
    </alternativeName>
</protein>
<name>RECO_ERWT9</name>
<feature type="chain" id="PRO_1000099381" description="DNA repair protein RecO">
    <location>
        <begin position="1"/>
        <end position="245"/>
    </location>
</feature>
<dbReference type="EMBL" id="CU468135">
    <property type="protein sequence ID" value="CAO96040.1"/>
    <property type="molecule type" value="Genomic_DNA"/>
</dbReference>
<dbReference type="RefSeq" id="WP_012440741.1">
    <property type="nucleotide sequence ID" value="NC_010694.1"/>
</dbReference>
<dbReference type="SMR" id="B2VI48"/>
<dbReference type="STRING" id="465817.ETA_09940"/>
<dbReference type="KEGG" id="eta:ETA_09940"/>
<dbReference type="eggNOG" id="COG1381">
    <property type="taxonomic scope" value="Bacteria"/>
</dbReference>
<dbReference type="HOGENOM" id="CLU_066645_1_0_6"/>
<dbReference type="OrthoDB" id="9804792at2"/>
<dbReference type="Proteomes" id="UP000001726">
    <property type="component" value="Chromosome"/>
</dbReference>
<dbReference type="GO" id="GO:0043590">
    <property type="term" value="C:bacterial nucleoid"/>
    <property type="evidence" value="ECO:0007669"/>
    <property type="project" value="TreeGrafter"/>
</dbReference>
<dbReference type="GO" id="GO:0006310">
    <property type="term" value="P:DNA recombination"/>
    <property type="evidence" value="ECO:0007669"/>
    <property type="project" value="UniProtKB-UniRule"/>
</dbReference>
<dbReference type="GO" id="GO:0006302">
    <property type="term" value="P:double-strand break repair"/>
    <property type="evidence" value="ECO:0007669"/>
    <property type="project" value="TreeGrafter"/>
</dbReference>
<dbReference type="Gene3D" id="2.40.50.140">
    <property type="entry name" value="Nucleic acid-binding proteins"/>
    <property type="match status" value="1"/>
</dbReference>
<dbReference type="Gene3D" id="1.20.1440.120">
    <property type="entry name" value="Recombination protein O, C-terminal domain"/>
    <property type="match status" value="1"/>
</dbReference>
<dbReference type="HAMAP" id="MF_00201">
    <property type="entry name" value="RecO"/>
    <property type="match status" value="1"/>
</dbReference>
<dbReference type="InterPro" id="IPR037278">
    <property type="entry name" value="ARFGAP/RecO"/>
</dbReference>
<dbReference type="InterPro" id="IPR022572">
    <property type="entry name" value="DNA_rep/recomb_RecO_N"/>
</dbReference>
<dbReference type="InterPro" id="IPR012340">
    <property type="entry name" value="NA-bd_OB-fold"/>
</dbReference>
<dbReference type="InterPro" id="IPR003717">
    <property type="entry name" value="RecO"/>
</dbReference>
<dbReference type="InterPro" id="IPR042242">
    <property type="entry name" value="RecO_C"/>
</dbReference>
<dbReference type="NCBIfam" id="TIGR00613">
    <property type="entry name" value="reco"/>
    <property type="match status" value="1"/>
</dbReference>
<dbReference type="PANTHER" id="PTHR33991">
    <property type="entry name" value="DNA REPAIR PROTEIN RECO"/>
    <property type="match status" value="1"/>
</dbReference>
<dbReference type="PANTHER" id="PTHR33991:SF1">
    <property type="entry name" value="DNA REPAIR PROTEIN RECO"/>
    <property type="match status" value="1"/>
</dbReference>
<dbReference type="Pfam" id="PF02565">
    <property type="entry name" value="RecO_C"/>
    <property type="match status" value="1"/>
</dbReference>
<dbReference type="Pfam" id="PF11967">
    <property type="entry name" value="RecO_N"/>
    <property type="match status" value="1"/>
</dbReference>
<dbReference type="SUPFAM" id="SSF57863">
    <property type="entry name" value="ArfGap/RecO-like zinc finger"/>
    <property type="match status" value="1"/>
</dbReference>
<dbReference type="SUPFAM" id="SSF50249">
    <property type="entry name" value="Nucleic acid-binding proteins"/>
    <property type="match status" value="1"/>
</dbReference>
<keyword id="KW-0227">DNA damage</keyword>
<keyword id="KW-0233">DNA recombination</keyword>
<keyword id="KW-0234">DNA repair</keyword>
<keyword id="KW-1185">Reference proteome</keyword>
<proteinExistence type="inferred from homology"/>
<sequence>MEGWQRAFVLHGRPWSETSLLLDLFSEQHGRVRVLAKGARAKRSSLKGALQPFTPLLVRWSGRGEVKTLRSAEPVSLALPLSGTTLYCGLYVNELLSRVLQHETAFSELFFDYLNCIQTLAADPPSPEPALRRFELSMLGHLGYGVDFLHCAGSGEEIADGMTYSYREEKGFIASLVTGHRSFTGRQLRALSTREFPDADTLRAAKRFTRIALKPWLGGKPLKSSELFRQFLPRKPANAAPADEE</sequence>
<accession>B2VI48</accession>